<organism>
    <name type="scientific">Xenopus tropicalis</name>
    <name type="common">Western clawed frog</name>
    <name type="synonym">Silurana tropicalis</name>
    <dbReference type="NCBI Taxonomy" id="8364"/>
    <lineage>
        <taxon>Eukaryota</taxon>
        <taxon>Metazoa</taxon>
        <taxon>Chordata</taxon>
        <taxon>Craniata</taxon>
        <taxon>Vertebrata</taxon>
        <taxon>Euteleostomi</taxon>
        <taxon>Amphibia</taxon>
        <taxon>Batrachia</taxon>
        <taxon>Anura</taxon>
        <taxon>Pipoidea</taxon>
        <taxon>Pipidae</taxon>
        <taxon>Xenopodinae</taxon>
        <taxon>Xenopus</taxon>
        <taxon>Silurana</taxon>
    </lineage>
</organism>
<proteinExistence type="evidence at transcript level"/>
<evidence type="ECO:0000250" key="1">
    <source>
        <dbReference type="UniProtKB" id="Q3KQ35"/>
    </source>
</evidence>
<evidence type="ECO:0000250" key="2">
    <source>
        <dbReference type="UniProtKB" id="Q90ZH9"/>
    </source>
</evidence>
<evidence type="ECO:0000250" key="3">
    <source>
        <dbReference type="UniProtKB" id="Q9H6I2"/>
    </source>
</evidence>
<evidence type="ECO:0000255" key="4">
    <source>
        <dbReference type="PROSITE-ProRule" id="PRU00267"/>
    </source>
</evidence>
<evidence type="ECO:0000255" key="5">
    <source>
        <dbReference type="PROSITE-ProRule" id="PRU00849"/>
    </source>
</evidence>
<evidence type="ECO:0000256" key="6">
    <source>
        <dbReference type="SAM" id="MobiDB-lite"/>
    </source>
</evidence>
<evidence type="ECO:0000269" key="7">
    <source>
    </source>
</evidence>
<evidence type="ECO:0000303" key="8">
    <source>
    </source>
</evidence>
<evidence type="ECO:0000305" key="9"/>
<evidence type="ECO:0000312" key="10">
    <source>
        <dbReference type="EMBL" id="AAH74527.1"/>
    </source>
</evidence>
<evidence type="ECO:0000312" key="11">
    <source>
        <dbReference type="EMBL" id="AAN76329.1"/>
    </source>
</evidence>
<evidence type="ECO:0000312" key="12">
    <source>
        <dbReference type="EMBL" id="AAT71996.1"/>
    </source>
</evidence>
<evidence type="ECO:0000312" key="13">
    <source>
        <dbReference type="EMBL" id="CAJ82986.1"/>
    </source>
</evidence>
<reference evidence="9 11" key="1">
    <citation type="journal article" date="2003" name="Dev. Dyn.">
        <title>Molecular components of the endoderm specification pathway in Xenopus tropicalis.</title>
        <authorList>
            <person name="D'Souza A."/>
            <person name="Lee M."/>
            <person name="Taverner N."/>
            <person name="Mason J."/>
            <person name="Carruthers S."/>
            <person name="Smith J.C."/>
            <person name="Amaya E."/>
            <person name="Papalopulu N."/>
            <person name="Zorn A.M."/>
        </authorList>
    </citation>
    <scope>NUCLEOTIDE SEQUENCE [MRNA]</scope>
    <scope>TISSUE SPECIFICITY</scope>
    <source>
        <tissue evidence="7">Gastrula</tissue>
    </source>
</reference>
<reference evidence="12" key="2">
    <citation type="submission" date="2004-07" db="EMBL/GenBank/DDBJ databases">
        <title>Sequence of Xenopus tropicalis development genes.</title>
        <authorList>
            <person name="Qin S."/>
            <person name="Dors M."/>
            <person name="Johnson E."/>
            <person name="Bloom S."/>
            <person name="Hood L."/>
            <person name="Rowen L."/>
        </authorList>
    </citation>
    <scope>NUCLEOTIDE SEQUENCE [GENOMIC DNA]</scope>
</reference>
<reference evidence="12" key="3">
    <citation type="submission" date="2006-10" db="EMBL/GenBank/DDBJ databases">
        <authorList>
            <consortium name="Sanger Xenopus tropicalis EST/cDNA project"/>
        </authorList>
    </citation>
    <scope>NUCLEOTIDE SEQUENCE [LARGE SCALE MRNA]</scope>
    <source>
        <tissue evidence="13">Neurula</tissue>
    </source>
</reference>
<reference evidence="12" key="4">
    <citation type="submission" date="2004-06" db="EMBL/GenBank/DDBJ databases">
        <authorList>
            <consortium name="NIH - Xenopus Gene Collection (XGC) project"/>
        </authorList>
    </citation>
    <scope>NUCLEOTIDE SEQUENCE [LARGE SCALE MRNA]</scope>
    <source>
        <tissue evidence="10">Tail bud</tissue>
    </source>
</reference>
<comment type="function">
    <text evidence="1 2">Transcription activator. Binds to the DNA sequence 5'-AACAAT-3'. All of the sox17 proteins are required for embryonic endoderm development and gastrulation movements, and show some redundancy in function. In addition, the sox17 proteins have distinct but overlapping roles in later gut development. Acts downstream of vegt-signaling in endoderm differentiation to induce a range of endodermal genes both directly (including endodermin and dhh/chh) and indirectly. Also represses wnt-responsive genes to inhibit wnt/beta-catenin signaling (By similarity).</text>
</comment>
<comment type="subunit">
    <text evidence="1">Interacts (via C-terminus) with ctnnb1/beta-catenin (via Armadillo repeats); this interaction is required for inhibition of wnt-signaling.</text>
</comment>
<comment type="subcellular location">
    <subcellularLocation>
        <location evidence="1 4">Nucleus</location>
    </subcellularLocation>
</comment>
<comment type="tissue specificity">
    <text evidence="7">Expressed throughout the deep and superficial endoderm during gastrulation. During neural and early tail bud stages, expression declines significantly in the anterior endoderm, except in the endoderm behind the cement gland. Strong expression persists in the endoderm posterior to the liver diverticulum until late tail bud stage. By late tailbud, expression is undetectable in most of the endoderm but is maintained in the presumptive gall bladder region and the extreme posterior region. In addition, expressed in endothelial cells in the head and along the flank of the embryo.</text>
</comment>
<comment type="domain">
    <text evidence="3">The 9aaTAD motif is a transactivation domain present in a large number of yeast and animal transcription factors.</text>
</comment>
<keyword id="KW-0010">Activator</keyword>
<keyword id="KW-0217">Developmental protein</keyword>
<keyword id="KW-0238">DNA-binding</keyword>
<keyword id="KW-0306">Gastrulation</keyword>
<keyword id="KW-0539">Nucleus</keyword>
<keyword id="KW-1185">Reference proteome</keyword>
<keyword id="KW-0804">Transcription</keyword>
<keyword id="KW-0805">Transcription regulation</keyword>
<keyword id="KW-0879">Wnt signaling pathway</keyword>
<accession>Q8AWH3</accession>
<sequence>MSSPDGGYASDDQNQGKCSVPIMMTGLGQCQWAEPMNSLGEGKLKSDAGSANSRGKAEARIRRPMNAFMVWAKDERKRLAQQNPDLHNAELSKMLGKSWKALTLAEKRPFVEEAERLRVQHMQDHPNYKYRPRRRKQVKRMKRADTGFMHMAEPPESAVLGTDGRMCLESFSLGYHEQTYPHSQLPQGSHYREPQAMAPHYDGYSLPTPESSPLDLAEADPVFFTSPPQDECQMMPYSYNASYTHQQNSGASMLVRQMPQAEQMGQGSPVQGMMGCQSSPQMYYGQMYLPGSARHHQLPQAGQNSPPPEAQQMGRADHIQQVDMLAEVDRTEFEQYLSYVAKSDLGMHYHGQESVVPTADNGPISSVLSDASTAVYYCNYPSA</sequence>
<protein>
    <recommendedName>
        <fullName evidence="1">Transcription factor Sox-17-alpha</fullName>
        <shortName evidence="12">Sox17alpha</shortName>
        <shortName evidence="8">tSox17alpha</shortName>
    </recommendedName>
</protein>
<name>SX17A_XENTR</name>
<feature type="chain" id="PRO_0000376052" description="Transcription factor Sox-17-alpha">
    <location>
        <begin position="1"/>
        <end position="383"/>
    </location>
</feature>
<feature type="domain" description="Sox C-terminal" evidence="5">
    <location>
        <begin position="267"/>
        <end position="382"/>
    </location>
</feature>
<feature type="DNA-binding region" description="HMG box" evidence="4">
    <location>
        <begin position="61"/>
        <end position="129"/>
    </location>
</feature>
<feature type="region of interest" description="Disordered" evidence="6">
    <location>
        <begin position="1"/>
        <end position="20"/>
    </location>
</feature>
<feature type="region of interest" description="Disordered" evidence="6">
    <location>
        <begin position="37"/>
        <end position="58"/>
    </location>
</feature>
<feature type="region of interest" description="Required for transcriptional activity and interaction with ctnnb1" evidence="1">
    <location>
        <begin position="332"/>
        <end position="337"/>
    </location>
</feature>
<feature type="short sequence motif" description="9aaTAD" evidence="3">
    <location>
        <begin position="331"/>
        <end position="339"/>
    </location>
</feature>
<gene>
    <name type="primary">sox17a</name>
    <name evidence="13" type="synonym">sox17</name>
    <name type="ORF">TNeu118d15.1</name>
</gene>
<dbReference type="EMBL" id="AY157635">
    <property type="protein sequence ID" value="AAN76329.1"/>
    <property type="molecule type" value="mRNA"/>
</dbReference>
<dbReference type="EMBL" id="AC148408">
    <property type="protein sequence ID" value="AAT71996.1"/>
    <property type="molecule type" value="Genomic_DNA"/>
</dbReference>
<dbReference type="EMBL" id="CR848309">
    <property type="protein sequence ID" value="CAJ82986.1"/>
    <property type="molecule type" value="mRNA"/>
</dbReference>
<dbReference type="EMBL" id="BC074527">
    <property type="protein sequence ID" value="AAH74527.1"/>
    <property type="molecule type" value="mRNA"/>
</dbReference>
<dbReference type="RefSeq" id="NP_989425.1">
    <property type="nucleotide sequence ID" value="NM_204094.1"/>
</dbReference>
<dbReference type="SMR" id="Q8AWH3"/>
<dbReference type="FunCoup" id="Q8AWH3">
    <property type="interactions" value="348"/>
</dbReference>
<dbReference type="STRING" id="8364.ENSXETP00000039437"/>
<dbReference type="PaxDb" id="8364-ENSXETP00000053697"/>
<dbReference type="DNASU" id="395066"/>
<dbReference type="GeneID" id="395066"/>
<dbReference type="KEGG" id="xtr:395066"/>
<dbReference type="AGR" id="Xenbase:XB-GENE-484295"/>
<dbReference type="CTD" id="395066"/>
<dbReference type="Xenbase" id="XB-GENE-484295">
    <property type="gene designation" value="sox17a"/>
</dbReference>
<dbReference type="eggNOG" id="KOG0527">
    <property type="taxonomic scope" value="Eukaryota"/>
</dbReference>
<dbReference type="HOGENOM" id="CLU_044994_0_0_1"/>
<dbReference type="InParanoid" id="Q8AWH3"/>
<dbReference type="OMA" id="PLAMYYP"/>
<dbReference type="OrthoDB" id="6247875at2759"/>
<dbReference type="PhylomeDB" id="Q8AWH3"/>
<dbReference type="Reactome" id="R-XTR-3769402">
    <property type="pathway name" value="Deactivation of the beta-catenin transactivating complex"/>
</dbReference>
<dbReference type="Proteomes" id="UP000008143">
    <property type="component" value="Chromosome 6"/>
</dbReference>
<dbReference type="Bgee" id="ENSXETG00000026438">
    <property type="expression patterns" value="Expressed in gastrula and 22 other cell types or tissues"/>
</dbReference>
<dbReference type="GO" id="GO:0005634">
    <property type="term" value="C:nucleus"/>
    <property type="evidence" value="ECO:0000250"/>
    <property type="project" value="UniProtKB"/>
</dbReference>
<dbReference type="GO" id="GO:0008013">
    <property type="term" value="F:beta-catenin binding"/>
    <property type="evidence" value="ECO:0000250"/>
    <property type="project" value="UniProtKB"/>
</dbReference>
<dbReference type="GO" id="GO:0043565">
    <property type="term" value="F:sequence-specific DNA binding"/>
    <property type="evidence" value="ECO:0000250"/>
    <property type="project" value="UniProtKB"/>
</dbReference>
<dbReference type="GO" id="GO:0061371">
    <property type="term" value="P:determination of heart left/right asymmetry"/>
    <property type="evidence" value="ECO:0007669"/>
    <property type="project" value="Ensembl"/>
</dbReference>
<dbReference type="GO" id="GO:0035469">
    <property type="term" value="P:determination of pancreatic left/right asymmetry"/>
    <property type="evidence" value="ECO:0007669"/>
    <property type="project" value="Ensembl"/>
</dbReference>
<dbReference type="GO" id="GO:0007492">
    <property type="term" value="P:endoderm development"/>
    <property type="evidence" value="ECO:0000250"/>
    <property type="project" value="UniProtKB"/>
</dbReference>
<dbReference type="GO" id="GO:0007369">
    <property type="term" value="P:gastrulation"/>
    <property type="evidence" value="ECO:0007669"/>
    <property type="project" value="UniProtKB-KW"/>
</dbReference>
<dbReference type="GO" id="GO:0070121">
    <property type="term" value="P:Kupffer's vesicle development"/>
    <property type="evidence" value="ECO:0007669"/>
    <property type="project" value="Ensembl"/>
</dbReference>
<dbReference type="GO" id="GO:0045893">
    <property type="term" value="P:positive regulation of DNA-templated transcription"/>
    <property type="evidence" value="ECO:0000250"/>
    <property type="project" value="UniProtKB"/>
</dbReference>
<dbReference type="GO" id="GO:0045944">
    <property type="term" value="P:positive regulation of transcription by RNA polymerase II"/>
    <property type="evidence" value="ECO:0000250"/>
    <property type="project" value="UniProtKB"/>
</dbReference>
<dbReference type="GO" id="GO:0060215">
    <property type="term" value="P:primitive hemopoiesis"/>
    <property type="evidence" value="ECO:0007669"/>
    <property type="project" value="Ensembl"/>
</dbReference>
<dbReference type="GO" id="GO:0016055">
    <property type="term" value="P:Wnt signaling pathway"/>
    <property type="evidence" value="ECO:0007669"/>
    <property type="project" value="UniProtKB-KW"/>
</dbReference>
<dbReference type="CDD" id="cd22047">
    <property type="entry name" value="HMG-box_SoxF_SOX17"/>
    <property type="match status" value="1"/>
</dbReference>
<dbReference type="FunFam" id="1.10.30.10:FF:000008">
    <property type="entry name" value="transcription factor SOX-7"/>
    <property type="match status" value="1"/>
</dbReference>
<dbReference type="Gene3D" id="1.10.30.10">
    <property type="entry name" value="High mobility group box domain"/>
    <property type="match status" value="1"/>
</dbReference>
<dbReference type="InterPro" id="IPR009071">
    <property type="entry name" value="HMG_box_dom"/>
</dbReference>
<dbReference type="InterPro" id="IPR036910">
    <property type="entry name" value="HMG_box_dom_sf"/>
</dbReference>
<dbReference type="InterPro" id="IPR033392">
    <property type="entry name" value="Sox7/17/18_central"/>
</dbReference>
<dbReference type="InterPro" id="IPR021934">
    <property type="entry name" value="Sox_C"/>
</dbReference>
<dbReference type="InterPro" id="IPR050140">
    <property type="entry name" value="SRY-related_HMG-box_TF-like"/>
</dbReference>
<dbReference type="PANTHER" id="PTHR10270">
    <property type="entry name" value="SOX TRANSCRIPTION FACTOR"/>
    <property type="match status" value="1"/>
</dbReference>
<dbReference type="PANTHER" id="PTHR10270:SF216">
    <property type="entry name" value="TRANSCRIPTION FACTOR SOX-17"/>
    <property type="match status" value="1"/>
</dbReference>
<dbReference type="Pfam" id="PF00505">
    <property type="entry name" value="HMG_box"/>
    <property type="match status" value="1"/>
</dbReference>
<dbReference type="Pfam" id="PF12067">
    <property type="entry name" value="Sox17_18_mid"/>
    <property type="match status" value="1"/>
</dbReference>
<dbReference type="SMART" id="SM00398">
    <property type="entry name" value="HMG"/>
    <property type="match status" value="1"/>
</dbReference>
<dbReference type="SUPFAM" id="SSF47095">
    <property type="entry name" value="HMG-box"/>
    <property type="match status" value="1"/>
</dbReference>
<dbReference type="PROSITE" id="PS50118">
    <property type="entry name" value="HMG_BOX_2"/>
    <property type="match status" value="1"/>
</dbReference>
<dbReference type="PROSITE" id="PS51516">
    <property type="entry name" value="SOX_C"/>
    <property type="match status" value="1"/>
</dbReference>